<dbReference type="EC" id="2.1.2.3" evidence="1"/>
<dbReference type="EC" id="3.5.4.10" evidence="1"/>
<dbReference type="EMBL" id="CP001034">
    <property type="protein sequence ID" value="ACB84054.1"/>
    <property type="molecule type" value="Genomic_DNA"/>
</dbReference>
<dbReference type="RefSeq" id="WP_012446941.1">
    <property type="nucleotide sequence ID" value="NC_010718.1"/>
</dbReference>
<dbReference type="SMR" id="B2A5W1"/>
<dbReference type="FunCoup" id="B2A5W1">
    <property type="interactions" value="391"/>
</dbReference>
<dbReference type="STRING" id="457570.Nther_0458"/>
<dbReference type="KEGG" id="nth:Nther_0458"/>
<dbReference type="eggNOG" id="COG0138">
    <property type="taxonomic scope" value="Bacteria"/>
</dbReference>
<dbReference type="HOGENOM" id="CLU_016316_5_2_9"/>
<dbReference type="InParanoid" id="B2A5W1"/>
<dbReference type="UniPathway" id="UPA00074">
    <property type="reaction ID" value="UER00133"/>
</dbReference>
<dbReference type="UniPathway" id="UPA00074">
    <property type="reaction ID" value="UER00135"/>
</dbReference>
<dbReference type="Proteomes" id="UP000001683">
    <property type="component" value="Chromosome"/>
</dbReference>
<dbReference type="GO" id="GO:0005829">
    <property type="term" value="C:cytosol"/>
    <property type="evidence" value="ECO:0007669"/>
    <property type="project" value="TreeGrafter"/>
</dbReference>
<dbReference type="GO" id="GO:0003937">
    <property type="term" value="F:IMP cyclohydrolase activity"/>
    <property type="evidence" value="ECO:0007669"/>
    <property type="project" value="UniProtKB-UniRule"/>
</dbReference>
<dbReference type="GO" id="GO:0004643">
    <property type="term" value="F:phosphoribosylaminoimidazolecarboxamide formyltransferase activity"/>
    <property type="evidence" value="ECO:0007669"/>
    <property type="project" value="UniProtKB-UniRule"/>
</dbReference>
<dbReference type="GO" id="GO:0006189">
    <property type="term" value="P:'de novo' IMP biosynthetic process"/>
    <property type="evidence" value="ECO:0007669"/>
    <property type="project" value="UniProtKB-UniRule"/>
</dbReference>
<dbReference type="CDD" id="cd01421">
    <property type="entry name" value="IMPCH"/>
    <property type="match status" value="1"/>
</dbReference>
<dbReference type="FunFam" id="3.40.140.20:FF:000001">
    <property type="entry name" value="Bifunctional purine biosynthesis protein PurH"/>
    <property type="match status" value="1"/>
</dbReference>
<dbReference type="FunFam" id="3.40.50.1380:FF:000001">
    <property type="entry name" value="Bifunctional purine biosynthesis protein PurH"/>
    <property type="match status" value="1"/>
</dbReference>
<dbReference type="Gene3D" id="3.40.140.20">
    <property type="match status" value="2"/>
</dbReference>
<dbReference type="Gene3D" id="3.40.50.1380">
    <property type="entry name" value="Methylglyoxal synthase-like domain"/>
    <property type="match status" value="1"/>
</dbReference>
<dbReference type="HAMAP" id="MF_00139">
    <property type="entry name" value="PurH"/>
    <property type="match status" value="1"/>
</dbReference>
<dbReference type="InterPro" id="IPR024051">
    <property type="entry name" value="AICAR_Tfase_dup_dom_sf"/>
</dbReference>
<dbReference type="InterPro" id="IPR016193">
    <property type="entry name" value="Cytidine_deaminase-like"/>
</dbReference>
<dbReference type="InterPro" id="IPR011607">
    <property type="entry name" value="MGS-like_dom"/>
</dbReference>
<dbReference type="InterPro" id="IPR036914">
    <property type="entry name" value="MGS-like_dom_sf"/>
</dbReference>
<dbReference type="InterPro" id="IPR002695">
    <property type="entry name" value="PurH-like"/>
</dbReference>
<dbReference type="NCBIfam" id="NF002049">
    <property type="entry name" value="PRK00881.1"/>
    <property type="match status" value="1"/>
</dbReference>
<dbReference type="NCBIfam" id="TIGR00355">
    <property type="entry name" value="purH"/>
    <property type="match status" value="1"/>
</dbReference>
<dbReference type="PANTHER" id="PTHR11692:SF0">
    <property type="entry name" value="BIFUNCTIONAL PURINE BIOSYNTHESIS PROTEIN ATIC"/>
    <property type="match status" value="1"/>
</dbReference>
<dbReference type="PANTHER" id="PTHR11692">
    <property type="entry name" value="BIFUNCTIONAL PURINE BIOSYNTHESIS PROTEIN PURH"/>
    <property type="match status" value="1"/>
</dbReference>
<dbReference type="Pfam" id="PF01808">
    <property type="entry name" value="AICARFT_IMPCHas"/>
    <property type="match status" value="1"/>
</dbReference>
<dbReference type="Pfam" id="PF02142">
    <property type="entry name" value="MGS"/>
    <property type="match status" value="1"/>
</dbReference>
<dbReference type="PIRSF" id="PIRSF000414">
    <property type="entry name" value="AICARFT_IMPCHas"/>
    <property type="match status" value="1"/>
</dbReference>
<dbReference type="SMART" id="SM00798">
    <property type="entry name" value="AICARFT_IMPCHas"/>
    <property type="match status" value="1"/>
</dbReference>
<dbReference type="SMART" id="SM00851">
    <property type="entry name" value="MGS"/>
    <property type="match status" value="1"/>
</dbReference>
<dbReference type="SUPFAM" id="SSF53927">
    <property type="entry name" value="Cytidine deaminase-like"/>
    <property type="match status" value="1"/>
</dbReference>
<dbReference type="SUPFAM" id="SSF52335">
    <property type="entry name" value="Methylglyoxal synthase-like"/>
    <property type="match status" value="1"/>
</dbReference>
<dbReference type="PROSITE" id="PS51855">
    <property type="entry name" value="MGS"/>
    <property type="match status" value="1"/>
</dbReference>
<evidence type="ECO:0000255" key="1">
    <source>
        <dbReference type="HAMAP-Rule" id="MF_00139"/>
    </source>
</evidence>
<evidence type="ECO:0000255" key="2">
    <source>
        <dbReference type="PROSITE-ProRule" id="PRU01202"/>
    </source>
</evidence>
<proteinExistence type="inferred from homology"/>
<organism>
    <name type="scientific">Natranaerobius thermophilus (strain ATCC BAA-1301 / DSM 18059 / JW/NM-WN-LF)</name>
    <dbReference type="NCBI Taxonomy" id="457570"/>
    <lineage>
        <taxon>Bacteria</taxon>
        <taxon>Bacillati</taxon>
        <taxon>Bacillota</taxon>
        <taxon>Clostridia</taxon>
        <taxon>Natranaerobiales</taxon>
        <taxon>Natranaerobiaceae</taxon>
        <taxon>Natranaerobius</taxon>
    </lineage>
</organism>
<comment type="catalytic activity">
    <reaction evidence="1">
        <text>(6R)-10-formyltetrahydrofolate + 5-amino-1-(5-phospho-beta-D-ribosyl)imidazole-4-carboxamide = 5-formamido-1-(5-phospho-D-ribosyl)imidazole-4-carboxamide + (6S)-5,6,7,8-tetrahydrofolate</text>
        <dbReference type="Rhea" id="RHEA:22192"/>
        <dbReference type="ChEBI" id="CHEBI:57453"/>
        <dbReference type="ChEBI" id="CHEBI:58467"/>
        <dbReference type="ChEBI" id="CHEBI:58475"/>
        <dbReference type="ChEBI" id="CHEBI:195366"/>
        <dbReference type="EC" id="2.1.2.3"/>
    </reaction>
</comment>
<comment type="catalytic activity">
    <reaction evidence="1">
        <text>IMP + H2O = 5-formamido-1-(5-phospho-D-ribosyl)imidazole-4-carboxamide</text>
        <dbReference type="Rhea" id="RHEA:18445"/>
        <dbReference type="ChEBI" id="CHEBI:15377"/>
        <dbReference type="ChEBI" id="CHEBI:58053"/>
        <dbReference type="ChEBI" id="CHEBI:58467"/>
        <dbReference type="EC" id="3.5.4.10"/>
    </reaction>
</comment>
<comment type="pathway">
    <text evidence="1">Purine metabolism; IMP biosynthesis via de novo pathway; 5-formamido-1-(5-phospho-D-ribosyl)imidazole-4-carboxamide from 5-amino-1-(5-phospho-D-ribosyl)imidazole-4-carboxamide (10-formyl THF route): step 1/1.</text>
</comment>
<comment type="pathway">
    <text evidence="1">Purine metabolism; IMP biosynthesis via de novo pathway; IMP from 5-formamido-1-(5-phospho-D-ribosyl)imidazole-4-carboxamide: step 1/1.</text>
</comment>
<comment type="domain">
    <text evidence="1">The IMP cyclohydrolase activity resides in the N-terminal region.</text>
</comment>
<comment type="similarity">
    <text evidence="1">Belongs to the PurH family.</text>
</comment>
<reference key="1">
    <citation type="submission" date="2008-04" db="EMBL/GenBank/DDBJ databases">
        <title>Complete sequence of chromosome of Natranaerobius thermophilus JW/NM-WN-LF.</title>
        <authorList>
            <consortium name="US DOE Joint Genome Institute"/>
            <person name="Copeland A."/>
            <person name="Lucas S."/>
            <person name="Lapidus A."/>
            <person name="Glavina del Rio T."/>
            <person name="Dalin E."/>
            <person name="Tice H."/>
            <person name="Bruce D."/>
            <person name="Goodwin L."/>
            <person name="Pitluck S."/>
            <person name="Chertkov O."/>
            <person name="Brettin T."/>
            <person name="Detter J.C."/>
            <person name="Han C."/>
            <person name="Kuske C.R."/>
            <person name="Schmutz J."/>
            <person name="Larimer F."/>
            <person name="Land M."/>
            <person name="Hauser L."/>
            <person name="Kyrpides N."/>
            <person name="Lykidis A."/>
            <person name="Mesbah N.M."/>
            <person name="Wiegel J."/>
        </authorList>
    </citation>
    <scope>NUCLEOTIDE SEQUENCE [LARGE SCALE GENOMIC DNA]</scope>
    <source>
        <strain>ATCC BAA-1301 / DSM 18059 / JW/NM-WN-LF</strain>
    </source>
</reference>
<gene>
    <name evidence="1" type="primary">purH</name>
    <name type="ordered locus">Nther_0458</name>
</gene>
<sequence length="509" mass="56802">MTIQKINRVLLSVYDKTGLITLAQELKDMGVELVSTGGTLRHLQTHGIPVYSVEEVTGFPEILSGRVKTLHPKIHGGILAKNRENEELSSLDIKTFDLVIVNLYPFEQVMQKAEATEEEVMENIDIGGPTMIRAAAKNWYRVGVCVDPTDYEVLTQQLKQYHGLTDEFRKTLARKAFKHTAQYDKAIFNYFESVDTNKDDETELKFPEFNLLESRELPYGENPHQKASLLMESQKFIQHQGKGLSYNNFQDIDAAIKLVHEFQKPAVVAVKHTNPCGVGVSNTIEEAYDKAYQGDPVSIFGGIVACNRPVTEELASKLTEIFLDVIIAPEFEPRALEKLKSKSGTKVVEMDLEKMVGNKVEIKSTTFGYLCQEADYHHPHPQNWDRVAGEQAKPEEIDDLIIAEKIVKHVKSNAIVVVKEGQSLGIGAGQMNRVGASRIALENAGKESQNSVLASDAFFPFNDVVKLCSQYGVSAIVQPGGSKRDQDSIDLAQETGITMYFTGIRHFKH</sequence>
<protein>
    <recommendedName>
        <fullName evidence="1">Bifunctional purine biosynthesis protein PurH</fullName>
    </recommendedName>
    <domain>
        <recommendedName>
            <fullName evidence="1">Phosphoribosylaminoimidazolecarboxamide formyltransferase</fullName>
            <ecNumber evidence="1">2.1.2.3</ecNumber>
        </recommendedName>
        <alternativeName>
            <fullName evidence="1">AICAR transformylase</fullName>
        </alternativeName>
    </domain>
    <domain>
        <recommendedName>
            <fullName evidence="1">IMP cyclohydrolase</fullName>
            <ecNumber evidence="1">3.5.4.10</ecNumber>
        </recommendedName>
        <alternativeName>
            <fullName evidence="1">ATIC</fullName>
        </alternativeName>
        <alternativeName>
            <fullName evidence="1">IMP synthase</fullName>
        </alternativeName>
        <alternativeName>
            <fullName evidence="1">Inosinicase</fullName>
        </alternativeName>
    </domain>
</protein>
<feature type="chain" id="PRO_1000096075" description="Bifunctional purine biosynthesis protein PurH">
    <location>
        <begin position="1"/>
        <end position="509"/>
    </location>
</feature>
<feature type="domain" description="MGS-like" evidence="2">
    <location>
        <begin position="1"/>
        <end position="146"/>
    </location>
</feature>
<name>PUR9_NATTJ</name>
<accession>B2A5W1</accession>
<keyword id="KW-0378">Hydrolase</keyword>
<keyword id="KW-0511">Multifunctional enzyme</keyword>
<keyword id="KW-0658">Purine biosynthesis</keyword>
<keyword id="KW-1185">Reference proteome</keyword>
<keyword id="KW-0808">Transferase</keyword>